<feature type="signal peptide" evidence="3">
    <location>
        <begin position="1"/>
        <end position="23"/>
    </location>
</feature>
<feature type="chain" id="PRO_0000306802" description="Pikachurin">
    <location>
        <begin position="24"/>
        <end position="1018"/>
    </location>
</feature>
<feature type="domain" description="Fibronectin type-III 1" evidence="6">
    <location>
        <begin position="37"/>
        <end position="145"/>
    </location>
</feature>
<feature type="domain" description="Fibronectin type-III 2" evidence="6">
    <location>
        <begin position="153"/>
        <end position="248"/>
    </location>
</feature>
<feature type="domain" description="EGF-like 1" evidence="4">
    <location>
        <begin position="352"/>
        <end position="390"/>
    </location>
</feature>
<feature type="domain" description="Laminin G-like 1" evidence="5">
    <location>
        <begin position="395"/>
        <end position="573"/>
    </location>
</feature>
<feature type="domain" description="EGF-like 2" evidence="4">
    <location>
        <begin position="574"/>
        <end position="611"/>
    </location>
</feature>
<feature type="domain" description="Laminin G-like 2" evidence="5">
    <location>
        <begin position="618"/>
        <end position="797"/>
    </location>
</feature>
<feature type="domain" description="EGF-like 3" evidence="4">
    <location>
        <begin position="793"/>
        <end position="829"/>
    </location>
</feature>
<feature type="domain" description="Laminin G-like 3" evidence="5">
    <location>
        <begin position="836"/>
        <end position="1015"/>
    </location>
</feature>
<feature type="region of interest" description="Disordered" evidence="7">
    <location>
        <begin position="228"/>
        <end position="274"/>
    </location>
</feature>
<feature type="compositionally biased region" description="Polar residues" evidence="7">
    <location>
        <begin position="231"/>
        <end position="244"/>
    </location>
</feature>
<feature type="compositionally biased region" description="Acidic residues" evidence="7">
    <location>
        <begin position="265"/>
        <end position="274"/>
    </location>
</feature>
<feature type="glycosylation site" description="N-linked (GlcNAc...) asparagine" evidence="3">
    <location>
        <position position="47"/>
    </location>
</feature>
<feature type="disulfide bond" evidence="1">
    <location>
        <begin position="356"/>
        <end position="367"/>
    </location>
</feature>
<feature type="disulfide bond" evidence="1">
    <location>
        <begin position="361"/>
        <end position="378"/>
    </location>
</feature>
<feature type="disulfide bond" evidence="1">
    <location>
        <begin position="380"/>
        <end position="389"/>
    </location>
</feature>
<feature type="disulfide bond" evidence="1">
    <location>
        <begin position="543"/>
        <end position="573"/>
    </location>
</feature>
<feature type="disulfide bond" evidence="1">
    <location>
        <begin position="578"/>
        <end position="589"/>
    </location>
</feature>
<feature type="disulfide bond" evidence="1">
    <location>
        <begin position="583"/>
        <end position="599"/>
    </location>
</feature>
<feature type="disulfide bond" evidence="1">
    <location>
        <begin position="601"/>
        <end position="610"/>
    </location>
</feature>
<feature type="disulfide bond" evidence="1">
    <location>
        <begin position="797"/>
        <end position="808"/>
    </location>
</feature>
<feature type="disulfide bond" evidence="1">
    <location>
        <begin position="802"/>
        <end position="817"/>
    </location>
</feature>
<feature type="disulfide bond" evidence="1">
    <location>
        <begin position="819"/>
        <end position="828"/>
    </location>
</feature>
<feature type="disulfide bond" evidence="1">
    <location>
        <begin position="988"/>
        <end position="1015"/>
    </location>
</feature>
<sequence>MDLIRGVLLRLLLLASSLGPGAAPLRSALRKQGKVGPPLDIILDALNCSAFSIQWKMPRHPPSPIMGYTVFYSEVGIDKSLQERSYGVPPGLDTPTSGRLDHQMIFEEVIGDLKPGTEYRVSMAAYSQTGKGRLSSPQHVTTLPQDSCLPPTAPQQPHVIVVSDSEVALSWKPGESEGSSPIQYYSVEFTRPDFDKSWTSIREQIQMDSMVIKGLDPDTNYQFAVRAVNPHGSSPRSQPSSTIRTARPEESGSGRYGPHYATDTEAGEDDDTFEDDLDLDISFEEVKPLPAIKEGNKKFFVESKMAPRPNPMTVSRLVPPTPASLPTTAVAPQPTPVDRKGKHGVAVMPRLFDTSCDETVCSADSFCVSDYTWGGSRCHCNLGKGGESCSEDIVIQYPQFFGHSYVTFEPLKNSYQAFQITLEFRAEAEDGLLLYCGENEHGRGDFMSLAVIRRSLQFRFNCGTGVAIIVSETKIKLGGWHTVTLYRDGLNGLLQLNNGTPVTGQSQGQYSKITFRTPLYLGGAPSAYWLVRATGTNRGFQGCVQALTVNGKRLDLRPWPLGKALSGADVGECSSGICDEASCINGGTCMASKADSYICLCPLGFRGRHCEDAFTLTIPQFKESLRSYAATPWPLEPRHYLSFMEFEVTFRPDSEDGVLLYSYDTGSKDFLSINMAGGHVEFRFDCGSGTGVLRSEEPLTLGHWHELCVSRTAKNGILQVDKQKAVEGMAEGGFTQIKCNSDIFIGGVPNYDDVKKNSGILKPFSGSIQKIILNDRTIHVKHDFTWGVNVENAAHPCVGSPCAHGGSCRPRKEGYECDCPLGFEGLHCQKAITEAIEIPQFIGRSYLTYDNPDILKRVSGSRSNAFMRFKTTAKDGLLLWRGDSPMRPNSDFISLGLRDGALVFSYNLGSGVASIMVNGSFNDGRWHRVKAVRDGQSGKITVDDYGARTGKSPGMMRQLNINGALYVGGMKEIALHTNRQYMRGLVGCISHFTLSTDYHISLVEDAVDGKNINTCGAK</sequence>
<proteinExistence type="evidence at transcript level"/>
<organism>
    <name type="scientific">Bos taurus</name>
    <name type="common">Bovine</name>
    <dbReference type="NCBI Taxonomy" id="9913"/>
    <lineage>
        <taxon>Eukaryota</taxon>
        <taxon>Metazoa</taxon>
        <taxon>Chordata</taxon>
        <taxon>Craniata</taxon>
        <taxon>Vertebrata</taxon>
        <taxon>Euteleostomi</taxon>
        <taxon>Mammalia</taxon>
        <taxon>Eutheria</taxon>
        <taxon>Laurasiatheria</taxon>
        <taxon>Artiodactyla</taxon>
        <taxon>Ruminantia</taxon>
        <taxon>Pecora</taxon>
        <taxon>Bovidae</taxon>
        <taxon>Bovinae</taxon>
        <taxon>Bos</taxon>
    </lineage>
</organism>
<evidence type="ECO:0000250" key="1"/>
<evidence type="ECO:0000250" key="2">
    <source>
        <dbReference type="UniProtKB" id="Q4VBE4"/>
    </source>
</evidence>
<evidence type="ECO:0000255" key="3"/>
<evidence type="ECO:0000255" key="4">
    <source>
        <dbReference type="PROSITE-ProRule" id="PRU00076"/>
    </source>
</evidence>
<evidence type="ECO:0000255" key="5">
    <source>
        <dbReference type="PROSITE-ProRule" id="PRU00122"/>
    </source>
</evidence>
<evidence type="ECO:0000255" key="6">
    <source>
        <dbReference type="PROSITE-ProRule" id="PRU00316"/>
    </source>
</evidence>
<evidence type="ECO:0000256" key="7">
    <source>
        <dbReference type="SAM" id="MobiDB-lite"/>
    </source>
</evidence>
<comment type="function">
    <text evidence="2">Involved in both the retinal photoreceptor ribbon synapse formation and physiological functions of visual perception. Plays a key role in the synaptic organization of photoreceptors by mediating transsynaptic interaction between alpha-dystroglycan and GPR179 on the postsynaptic membrane. Necessary for proper bipolar dendritic tip apposition to the photoreceptor ribbon synapse. Promotes matrix assembly and cell adhesiveness.</text>
</comment>
<comment type="subunit">
    <text evidence="2">Interacts with DAG1 alpha-dystroglycan. Interacts with GPR158 and GPR179; transsynaptic interaction is required for synaptic organization of photoreceptor cells.</text>
</comment>
<comment type="subcellular location">
    <subcellularLocation>
        <location evidence="2">Secreted</location>
        <location evidence="2">Extracellular space</location>
        <location evidence="2">Extracellular matrix</location>
    </subcellularLocation>
    <subcellularLocation>
        <location evidence="2">Synaptic cleft</location>
    </subcellularLocation>
    <subcellularLocation>
        <location evidence="2">Presynaptic active zone</location>
    </subcellularLocation>
    <text evidence="2">Detected in the synaptic cleft of the ribbon synapse around the postsynaptic terminals of bipolar cells. Colocalizes with BSN, CTBP2 and DAG1 in photoreceptor synaptic terminals.</text>
</comment>
<comment type="PTM">
    <text evidence="2">O-glycosylated; contains chondroitin sulfate and heparan sulfate.</text>
</comment>
<dbReference type="EMBL" id="BC133537">
    <property type="protein sequence ID" value="AAI33538.1"/>
    <property type="molecule type" value="mRNA"/>
</dbReference>
<dbReference type="RefSeq" id="NP_001076947.1">
    <property type="nucleotide sequence ID" value="NM_001083478.1"/>
</dbReference>
<dbReference type="SMR" id="A3KN33"/>
<dbReference type="FunCoup" id="A3KN33">
    <property type="interactions" value="299"/>
</dbReference>
<dbReference type="STRING" id="9913.ENSBTAP00000026111"/>
<dbReference type="GlyCosmos" id="A3KN33">
    <property type="glycosylation" value="1 site, No reported glycans"/>
</dbReference>
<dbReference type="GlyGen" id="A3KN33">
    <property type="glycosylation" value="1 site"/>
</dbReference>
<dbReference type="PaxDb" id="9913-ENSBTAP00000026111"/>
<dbReference type="GeneID" id="534427"/>
<dbReference type="KEGG" id="bta:534427"/>
<dbReference type="CTD" id="133584"/>
<dbReference type="eggNOG" id="KOG0613">
    <property type="taxonomic scope" value="Eukaryota"/>
</dbReference>
<dbReference type="eggNOG" id="KOG3509">
    <property type="taxonomic scope" value="Eukaryota"/>
</dbReference>
<dbReference type="InParanoid" id="A3KN33"/>
<dbReference type="OrthoDB" id="10014052at2759"/>
<dbReference type="Proteomes" id="UP000009136">
    <property type="component" value="Unplaced"/>
</dbReference>
<dbReference type="GO" id="GO:0005604">
    <property type="term" value="C:basement membrane"/>
    <property type="evidence" value="ECO:0007669"/>
    <property type="project" value="UniProtKB-ARBA"/>
</dbReference>
<dbReference type="GO" id="GO:0042995">
    <property type="term" value="C:cell projection"/>
    <property type="evidence" value="ECO:0007669"/>
    <property type="project" value="UniProtKB-KW"/>
</dbReference>
<dbReference type="GO" id="GO:0048786">
    <property type="term" value="C:presynaptic active zone"/>
    <property type="evidence" value="ECO:0007669"/>
    <property type="project" value="UniProtKB-SubCell"/>
</dbReference>
<dbReference type="GO" id="GO:0043083">
    <property type="term" value="C:synaptic cleft"/>
    <property type="evidence" value="ECO:0007669"/>
    <property type="project" value="UniProtKB-SubCell"/>
</dbReference>
<dbReference type="GO" id="GO:0005509">
    <property type="term" value="F:calcium ion binding"/>
    <property type="evidence" value="ECO:0007669"/>
    <property type="project" value="InterPro"/>
</dbReference>
<dbReference type="CDD" id="cd00054">
    <property type="entry name" value="EGF_CA"/>
    <property type="match status" value="2"/>
</dbReference>
<dbReference type="CDD" id="cd00063">
    <property type="entry name" value="FN3"/>
    <property type="match status" value="2"/>
</dbReference>
<dbReference type="CDD" id="cd00110">
    <property type="entry name" value="LamG"/>
    <property type="match status" value="3"/>
</dbReference>
<dbReference type="FunFam" id="2.60.40.10:FF:001294">
    <property type="entry name" value="EGF like, fibronectin type III and laminin G domains"/>
    <property type="match status" value="1"/>
</dbReference>
<dbReference type="FunFam" id="2.60.120.200:FF:000032">
    <property type="entry name" value="pikachurin isoform X1"/>
    <property type="match status" value="1"/>
</dbReference>
<dbReference type="FunFam" id="2.60.120.200:FF:000033">
    <property type="entry name" value="pikachurin isoform X1"/>
    <property type="match status" value="1"/>
</dbReference>
<dbReference type="FunFam" id="2.60.120.200:FF:000034">
    <property type="entry name" value="pikachurin isoform X1"/>
    <property type="match status" value="1"/>
</dbReference>
<dbReference type="FunFam" id="2.60.40.10:FF:000793">
    <property type="entry name" value="pikachurin isoform X1"/>
    <property type="match status" value="1"/>
</dbReference>
<dbReference type="FunFam" id="2.10.25.10:FF:000220">
    <property type="entry name" value="pikachurin isoform X3"/>
    <property type="match status" value="1"/>
</dbReference>
<dbReference type="FunFam" id="2.10.25.10:FF:000248">
    <property type="entry name" value="pikachurin isoform X3"/>
    <property type="match status" value="1"/>
</dbReference>
<dbReference type="Gene3D" id="2.60.120.200">
    <property type="match status" value="3"/>
</dbReference>
<dbReference type="Gene3D" id="2.60.40.10">
    <property type="entry name" value="Immunoglobulins"/>
    <property type="match status" value="2"/>
</dbReference>
<dbReference type="Gene3D" id="2.10.25.10">
    <property type="entry name" value="Laminin"/>
    <property type="match status" value="2"/>
</dbReference>
<dbReference type="InterPro" id="IPR013320">
    <property type="entry name" value="ConA-like_dom_sf"/>
</dbReference>
<dbReference type="InterPro" id="IPR001881">
    <property type="entry name" value="EGF-like_Ca-bd_dom"/>
</dbReference>
<dbReference type="InterPro" id="IPR000742">
    <property type="entry name" value="EGF-like_dom"/>
</dbReference>
<dbReference type="InterPro" id="IPR056943">
    <property type="entry name" value="EGF_Pikachurin"/>
</dbReference>
<dbReference type="InterPro" id="IPR003961">
    <property type="entry name" value="FN3_dom"/>
</dbReference>
<dbReference type="InterPro" id="IPR036116">
    <property type="entry name" value="FN3_sf"/>
</dbReference>
<dbReference type="InterPro" id="IPR013783">
    <property type="entry name" value="Ig-like_fold"/>
</dbReference>
<dbReference type="InterPro" id="IPR001791">
    <property type="entry name" value="Laminin_G"/>
</dbReference>
<dbReference type="InterPro" id="IPR050372">
    <property type="entry name" value="Neurexin-related_CASP"/>
</dbReference>
<dbReference type="PANTHER" id="PTHR15036:SF88">
    <property type="entry name" value="PIKACHURIN"/>
    <property type="match status" value="1"/>
</dbReference>
<dbReference type="PANTHER" id="PTHR15036">
    <property type="entry name" value="PIKACHURIN-LIKE PROTEIN"/>
    <property type="match status" value="1"/>
</dbReference>
<dbReference type="Pfam" id="PF00008">
    <property type="entry name" value="EGF"/>
    <property type="match status" value="2"/>
</dbReference>
<dbReference type="Pfam" id="PF25016">
    <property type="entry name" value="EGF_Pikachurin"/>
    <property type="match status" value="1"/>
</dbReference>
<dbReference type="Pfam" id="PF00041">
    <property type="entry name" value="fn3"/>
    <property type="match status" value="2"/>
</dbReference>
<dbReference type="Pfam" id="PF00054">
    <property type="entry name" value="Laminin_G_1"/>
    <property type="match status" value="1"/>
</dbReference>
<dbReference type="Pfam" id="PF02210">
    <property type="entry name" value="Laminin_G_2"/>
    <property type="match status" value="2"/>
</dbReference>
<dbReference type="SMART" id="SM00181">
    <property type="entry name" value="EGF"/>
    <property type="match status" value="3"/>
</dbReference>
<dbReference type="SMART" id="SM00179">
    <property type="entry name" value="EGF_CA"/>
    <property type="match status" value="2"/>
</dbReference>
<dbReference type="SMART" id="SM00060">
    <property type="entry name" value="FN3"/>
    <property type="match status" value="2"/>
</dbReference>
<dbReference type="SMART" id="SM00282">
    <property type="entry name" value="LamG"/>
    <property type="match status" value="3"/>
</dbReference>
<dbReference type="SUPFAM" id="SSF49899">
    <property type="entry name" value="Concanavalin A-like lectins/glucanases"/>
    <property type="match status" value="3"/>
</dbReference>
<dbReference type="SUPFAM" id="SSF49265">
    <property type="entry name" value="Fibronectin type III"/>
    <property type="match status" value="1"/>
</dbReference>
<dbReference type="PROSITE" id="PS00022">
    <property type="entry name" value="EGF_1"/>
    <property type="match status" value="3"/>
</dbReference>
<dbReference type="PROSITE" id="PS01186">
    <property type="entry name" value="EGF_2"/>
    <property type="match status" value="2"/>
</dbReference>
<dbReference type="PROSITE" id="PS50026">
    <property type="entry name" value="EGF_3"/>
    <property type="match status" value="3"/>
</dbReference>
<dbReference type="PROSITE" id="PS50853">
    <property type="entry name" value="FN3"/>
    <property type="match status" value="2"/>
</dbReference>
<dbReference type="PROSITE" id="PS50025">
    <property type="entry name" value="LAM_G_DOMAIN"/>
    <property type="match status" value="3"/>
</dbReference>
<name>EGFLA_BOVIN</name>
<reference key="1">
    <citation type="submission" date="2007-02" db="EMBL/GenBank/DDBJ databases">
        <authorList>
            <consortium name="NIH - Mammalian Gene Collection (MGC) project"/>
        </authorList>
    </citation>
    <scope>NUCLEOTIDE SEQUENCE [LARGE SCALE MRNA]</scope>
    <source>
        <strain>Hereford</strain>
        <tissue>Fetal skin</tissue>
    </source>
</reference>
<gene>
    <name type="primary">EGFLAM</name>
</gene>
<protein>
    <recommendedName>
        <fullName>Pikachurin</fullName>
    </recommendedName>
    <alternativeName>
        <fullName>EGF-like, fibronectin type-III and laminin G-like domain-containing protein</fullName>
    </alternativeName>
</protein>
<keyword id="KW-0966">Cell projection</keyword>
<keyword id="KW-1015">Disulfide bond</keyword>
<keyword id="KW-0245">EGF-like domain</keyword>
<keyword id="KW-0272">Extracellular matrix</keyword>
<keyword id="KW-0325">Glycoprotein</keyword>
<keyword id="KW-0357">Heparan sulfate</keyword>
<keyword id="KW-0654">Proteoglycan</keyword>
<keyword id="KW-1185">Reference proteome</keyword>
<keyword id="KW-0677">Repeat</keyword>
<keyword id="KW-0964">Secreted</keyword>
<keyword id="KW-0732">Signal</keyword>
<keyword id="KW-0770">Synapse</keyword>
<accession>A3KN33</accession>